<comment type="function">
    <text evidence="2">Component of the cytochrome c oxidase, the last enzyme in the mitochondrial electron transport chain which drives oxidative phosphorylation. The respiratory chain contains 3 multisubunit complexes succinate dehydrogenase (complex II, CII), ubiquinol-cytochrome c oxidoreductase (cytochrome b-c1 complex, complex III, CIII) and cytochrome c oxidase (complex IV, CIV), that cooperate to transfer electrons derived from NADH and succinate to molecular oxygen, creating an electrochemical gradient over the inner membrane that drives transmembrane transport and the ATP synthase. Cytochrome c oxidase is the component of the respiratory chain that catalyzes the reduction of oxygen to water. Electrons originating from reduced cytochrome c in the intermembrane space (IMS) are transferred via the dinuclear copper A center (CU(A)) of subunit 2 and heme A of subunit 1 to the active site in subunit 1, a binuclear center (BNC) formed by heme A3 and copper B (CU(B)). The BNC reduces molecular oxygen to 2 water molecules using 4 electrons from cytochrome c in the IMS and 4 protons from the mitochondrial matrix.</text>
</comment>
<comment type="catalytic activity">
    <reaction evidence="2">
        <text>4 Fe(II)-[cytochrome c] + O2 + 8 H(+)(in) = 4 Fe(III)-[cytochrome c] + 2 H2O + 4 H(+)(out)</text>
        <dbReference type="Rhea" id="RHEA:11436"/>
        <dbReference type="Rhea" id="RHEA-COMP:10350"/>
        <dbReference type="Rhea" id="RHEA-COMP:14399"/>
        <dbReference type="ChEBI" id="CHEBI:15377"/>
        <dbReference type="ChEBI" id="CHEBI:15378"/>
        <dbReference type="ChEBI" id="CHEBI:15379"/>
        <dbReference type="ChEBI" id="CHEBI:29033"/>
        <dbReference type="ChEBI" id="CHEBI:29034"/>
        <dbReference type="EC" id="7.1.1.9"/>
    </reaction>
    <physiologicalReaction direction="left-to-right" evidence="2">
        <dbReference type="Rhea" id="RHEA:11437"/>
    </physiologicalReaction>
</comment>
<comment type="subunit">
    <text evidence="1">Component of the cytochrome c oxidase (complex IV, CIV), a multisubunit enzyme composed of 14 subunits. The complex is composed of a catalytic core of 3 subunits MT-CO1, MT-CO2 and MT-CO3, encoded in the mitochondrial DNA, and 11 supernumerary subunits COX4I, COX5A, COX5B, COX6A, COX6B, COX6C, COX7A, COX7B, COX7C, COX8 and NDUFA4, which are encoded in the nuclear genome. The complex exists as a monomer or a dimer and forms supercomplexes (SCs) in the inner mitochondrial membrane with NADH-ubiquinone oxidoreductase (complex I, CI) and ubiquinol-cytochrome c oxidoreductase (cytochrome b-c1 complex, complex III, CIII), resulting in different assemblies (supercomplex SCI(1)III(2)IV(1) and megacomplex MCI(2)III(2)IV(2)).</text>
</comment>
<comment type="subcellular location">
    <subcellularLocation>
        <location evidence="1">Mitochondrion inner membrane</location>
        <topology evidence="1">Multi-pass membrane protein</topology>
    </subcellularLocation>
</comment>
<comment type="similarity">
    <text evidence="3">Belongs to the cytochrome c oxidase subunit 3 family.</text>
</comment>
<feature type="chain" id="PRO_0000183744" description="Cytochrome c oxidase subunit 3">
    <location>
        <begin position="1"/>
        <end position="261"/>
    </location>
</feature>
<feature type="topological domain" description="Mitochondrial matrix" evidence="1">
    <location>
        <begin position="1"/>
        <end position="15"/>
    </location>
</feature>
<feature type="transmembrane region" description="Helical; Name=I" evidence="1">
    <location>
        <begin position="16"/>
        <end position="34"/>
    </location>
</feature>
<feature type="topological domain" description="Mitochondrial intermembrane" evidence="1">
    <location>
        <begin position="35"/>
        <end position="40"/>
    </location>
</feature>
<feature type="transmembrane region" description="Helical; Name=II" evidence="1">
    <location>
        <begin position="41"/>
        <end position="66"/>
    </location>
</feature>
<feature type="topological domain" description="Mitochondrial matrix" evidence="1">
    <location>
        <begin position="67"/>
        <end position="72"/>
    </location>
</feature>
<feature type="transmembrane region" description="Helical; Name=III" evidence="1">
    <location>
        <begin position="73"/>
        <end position="105"/>
    </location>
</feature>
<feature type="topological domain" description="Mitochondrial intermembrane" evidence="1">
    <location>
        <begin position="106"/>
        <end position="128"/>
    </location>
</feature>
<feature type="transmembrane region" description="Helical; Name=IV" evidence="1">
    <location>
        <begin position="129"/>
        <end position="152"/>
    </location>
</feature>
<feature type="topological domain" description="Mitochondrial matrix" evidence="1">
    <location>
        <begin position="153"/>
        <end position="155"/>
    </location>
</feature>
<feature type="transmembrane region" description="Helical; Name=V" evidence="1">
    <location>
        <begin position="156"/>
        <end position="183"/>
    </location>
</feature>
<feature type="topological domain" description="Mitochondrial intermembrane" evidence="1">
    <location>
        <begin position="184"/>
        <end position="190"/>
    </location>
</feature>
<feature type="transmembrane region" description="Helical; Name=VI" evidence="1">
    <location>
        <begin position="191"/>
        <end position="223"/>
    </location>
</feature>
<feature type="topological domain" description="Mitochondrial matrix" evidence="1">
    <location>
        <begin position="224"/>
        <end position="232"/>
    </location>
</feature>
<feature type="transmembrane region" description="Helical; Name=VII" evidence="1">
    <location>
        <begin position="233"/>
        <end position="256"/>
    </location>
</feature>
<feature type="topological domain" description="Mitochondrial intermembrane" evidence="1">
    <location>
        <begin position="257"/>
        <end position="261"/>
    </location>
</feature>
<name>COX3_BALMU</name>
<protein>
    <recommendedName>
        <fullName>Cytochrome c oxidase subunit 3</fullName>
        <ecNumber>7.1.1.9</ecNumber>
    </recommendedName>
    <alternativeName>
        <fullName>Cytochrome c oxidase polypeptide III</fullName>
    </alternativeName>
</protein>
<keyword id="KW-0472">Membrane</keyword>
<keyword id="KW-0496">Mitochondrion</keyword>
<keyword id="KW-0999">Mitochondrion inner membrane</keyword>
<keyword id="KW-1185">Reference proteome</keyword>
<keyword id="KW-1278">Translocase</keyword>
<keyword id="KW-0812">Transmembrane</keyword>
<keyword id="KW-1133">Transmembrane helix</keyword>
<accession>P41295</accession>
<gene>
    <name type="primary">MT-CO3</name>
    <name type="synonym">COIII</name>
    <name type="synonym">COXIII</name>
    <name type="synonym">MTCO3</name>
</gene>
<organism>
    <name type="scientific">Balaenoptera musculus</name>
    <name type="common">Blue whale</name>
    <dbReference type="NCBI Taxonomy" id="9771"/>
    <lineage>
        <taxon>Eukaryota</taxon>
        <taxon>Metazoa</taxon>
        <taxon>Chordata</taxon>
        <taxon>Craniata</taxon>
        <taxon>Vertebrata</taxon>
        <taxon>Euteleostomi</taxon>
        <taxon>Mammalia</taxon>
        <taxon>Eutheria</taxon>
        <taxon>Laurasiatheria</taxon>
        <taxon>Artiodactyla</taxon>
        <taxon>Whippomorpha</taxon>
        <taxon>Cetacea</taxon>
        <taxon>Mysticeti</taxon>
        <taxon>Balaenopteridae</taxon>
        <taxon>Balaenoptera</taxon>
    </lineage>
</organism>
<proteinExistence type="inferred from homology"/>
<evidence type="ECO:0000250" key="1">
    <source>
        <dbReference type="UniProtKB" id="P00415"/>
    </source>
</evidence>
<evidence type="ECO:0000250" key="2">
    <source>
        <dbReference type="UniProtKB" id="P00420"/>
    </source>
</evidence>
<evidence type="ECO:0000305" key="3"/>
<reference key="1">
    <citation type="journal article" date="1993" name="J. Mol. Evol.">
        <title>Comparison between the complete mtDNA sequences of the blue and the fin whale, two species that can hybridize in nature.</title>
        <authorList>
            <person name="Arnason U."/>
            <person name="Gullberg A."/>
        </authorList>
    </citation>
    <scope>NUCLEOTIDE SEQUENCE [GENOMIC DNA]</scope>
</reference>
<dbReference type="EC" id="7.1.1.9"/>
<dbReference type="EMBL" id="X72204">
    <property type="protein sequence ID" value="CAA51001.1"/>
    <property type="molecule type" value="Genomic_DNA"/>
</dbReference>
<dbReference type="PIR" id="S41826">
    <property type="entry name" value="S41826"/>
</dbReference>
<dbReference type="RefSeq" id="NP_007062.1">
    <property type="nucleotide sequence ID" value="NC_001601.1"/>
</dbReference>
<dbReference type="SMR" id="P41295"/>
<dbReference type="GeneID" id="807744"/>
<dbReference type="KEGG" id="bmus:807744"/>
<dbReference type="CTD" id="4514"/>
<dbReference type="OrthoDB" id="10050457at2759"/>
<dbReference type="Proteomes" id="UP000694857">
    <property type="component" value="Mitochondrion MT"/>
</dbReference>
<dbReference type="GO" id="GO:0005743">
    <property type="term" value="C:mitochondrial inner membrane"/>
    <property type="evidence" value="ECO:0007669"/>
    <property type="project" value="UniProtKB-SubCell"/>
</dbReference>
<dbReference type="GO" id="GO:0045277">
    <property type="term" value="C:respiratory chain complex IV"/>
    <property type="evidence" value="ECO:0000250"/>
    <property type="project" value="UniProtKB"/>
</dbReference>
<dbReference type="GO" id="GO:0004129">
    <property type="term" value="F:cytochrome-c oxidase activity"/>
    <property type="evidence" value="ECO:0007669"/>
    <property type="project" value="UniProtKB-EC"/>
</dbReference>
<dbReference type="GO" id="GO:0006123">
    <property type="term" value="P:mitochondrial electron transport, cytochrome c to oxygen"/>
    <property type="evidence" value="ECO:0007669"/>
    <property type="project" value="TreeGrafter"/>
</dbReference>
<dbReference type="GO" id="GO:0008535">
    <property type="term" value="P:respiratory chain complex IV assembly"/>
    <property type="evidence" value="ECO:0000250"/>
    <property type="project" value="UniProtKB"/>
</dbReference>
<dbReference type="CDD" id="cd01665">
    <property type="entry name" value="Cyt_c_Oxidase_III"/>
    <property type="match status" value="1"/>
</dbReference>
<dbReference type="FunFam" id="1.10.287.70:FF:000048">
    <property type="entry name" value="Cytochrome c oxidase subunit 3"/>
    <property type="match status" value="1"/>
</dbReference>
<dbReference type="FunFam" id="1.20.120.80:FF:000002">
    <property type="entry name" value="Cytochrome c oxidase subunit 3"/>
    <property type="match status" value="1"/>
</dbReference>
<dbReference type="Gene3D" id="1.10.287.70">
    <property type="match status" value="1"/>
</dbReference>
<dbReference type="Gene3D" id="1.20.120.80">
    <property type="entry name" value="Cytochrome c oxidase, subunit III, four-helix bundle"/>
    <property type="match status" value="1"/>
</dbReference>
<dbReference type="InterPro" id="IPR024791">
    <property type="entry name" value="Cyt_c/ubiquinol_Oxase_su3"/>
</dbReference>
<dbReference type="InterPro" id="IPR033945">
    <property type="entry name" value="Cyt_c_oxase_su3_dom"/>
</dbReference>
<dbReference type="InterPro" id="IPR000298">
    <property type="entry name" value="Cyt_c_oxidase-like_su3"/>
</dbReference>
<dbReference type="InterPro" id="IPR035973">
    <property type="entry name" value="Cyt_c_oxidase_su3-like_sf"/>
</dbReference>
<dbReference type="InterPro" id="IPR013833">
    <property type="entry name" value="Cyt_c_oxidase_su3_a-hlx"/>
</dbReference>
<dbReference type="PANTHER" id="PTHR11403:SF7">
    <property type="entry name" value="CYTOCHROME C OXIDASE SUBUNIT 3"/>
    <property type="match status" value="1"/>
</dbReference>
<dbReference type="PANTHER" id="PTHR11403">
    <property type="entry name" value="CYTOCHROME C OXIDASE SUBUNIT III"/>
    <property type="match status" value="1"/>
</dbReference>
<dbReference type="Pfam" id="PF00510">
    <property type="entry name" value="COX3"/>
    <property type="match status" value="1"/>
</dbReference>
<dbReference type="SUPFAM" id="SSF81452">
    <property type="entry name" value="Cytochrome c oxidase subunit III-like"/>
    <property type="match status" value="1"/>
</dbReference>
<dbReference type="PROSITE" id="PS50253">
    <property type="entry name" value="COX3"/>
    <property type="match status" value="1"/>
</dbReference>
<geneLocation type="mitochondrion"/>
<sequence>MTHQTHSYHMVNPSPWPLTGALSALLMTSGLIMWFHFNSMILLTLGLSTNILTMYQWWRDIIRESTFQGHHTPTVQKGLRYGMILFIVSEVLFFTGFFWAFYHSSLAPTPELGGCWPPTGIHPLNPLEVPLLNTSVLLASGVSITWAHHSLMEGNRKHMLQALFITIALGLYFTLLQASEYYEAPFTISDGIYGSTFFVATGFHGLHVIIGSTFLIVCFLRQVKFHFTSNHHFGFERAAWYWHFVDVVWLFLYVSIYWWGS</sequence>